<proteinExistence type="inferred from homology"/>
<accession>B0TPW8</accession>
<organism>
    <name type="scientific">Shewanella halifaxensis (strain HAW-EB4)</name>
    <dbReference type="NCBI Taxonomy" id="458817"/>
    <lineage>
        <taxon>Bacteria</taxon>
        <taxon>Pseudomonadati</taxon>
        <taxon>Pseudomonadota</taxon>
        <taxon>Gammaproteobacteria</taxon>
        <taxon>Alteromonadales</taxon>
        <taxon>Shewanellaceae</taxon>
        <taxon>Shewanella</taxon>
    </lineage>
</organism>
<keyword id="KW-0021">Allosteric enzyme</keyword>
<keyword id="KW-0328">Glycosyltransferase</keyword>
<keyword id="KW-0342">GTP-binding</keyword>
<keyword id="KW-0460">Magnesium</keyword>
<keyword id="KW-0547">Nucleotide-binding</keyword>
<keyword id="KW-0808">Transferase</keyword>
<dbReference type="EC" id="2.4.2.9" evidence="1"/>
<dbReference type="EMBL" id="CP000931">
    <property type="protein sequence ID" value="ABZ76247.1"/>
    <property type="molecule type" value="Genomic_DNA"/>
</dbReference>
<dbReference type="RefSeq" id="WP_012155802.1">
    <property type="nucleotide sequence ID" value="NC_010334.1"/>
</dbReference>
<dbReference type="SMR" id="B0TPW8"/>
<dbReference type="STRING" id="458817.Shal_1681"/>
<dbReference type="KEGG" id="shl:Shal_1681"/>
<dbReference type="eggNOG" id="COG0035">
    <property type="taxonomic scope" value="Bacteria"/>
</dbReference>
<dbReference type="HOGENOM" id="CLU_067096_2_2_6"/>
<dbReference type="OrthoDB" id="9781675at2"/>
<dbReference type="UniPathway" id="UPA00574">
    <property type="reaction ID" value="UER00636"/>
</dbReference>
<dbReference type="Proteomes" id="UP000001317">
    <property type="component" value="Chromosome"/>
</dbReference>
<dbReference type="GO" id="GO:0005525">
    <property type="term" value="F:GTP binding"/>
    <property type="evidence" value="ECO:0007669"/>
    <property type="project" value="UniProtKB-KW"/>
</dbReference>
<dbReference type="GO" id="GO:0000287">
    <property type="term" value="F:magnesium ion binding"/>
    <property type="evidence" value="ECO:0007669"/>
    <property type="project" value="UniProtKB-UniRule"/>
</dbReference>
<dbReference type="GO" id="GO:0004845">
    <property type="term" value="F:uracil phosphoribosyltransferase activity"/>
    <property type="evidence" value="ECO:0007669"/>
    <property type="project" value="UniProtKB-UniRule"/>
</dbReference>
<dbReference type="GO" id="GO:0044206">
    <property type="term" value="P:UMP salvage"/>
    <property type="evidence" value="ECO:0007669"/>
    <property type="project" value="UniProtKB-UniRule"/>
</dbReference>
<dbReference type="GO" id="GO:0006223">
    <property type="term" value="P:uracil salvage"/>
    <property type="evidence" value="ECO:0007669"/>
    <property type="project" value="InterPro"/>
</dbReference>
<dbReference type="CDD" id="cd06223">
    <property type="entry name" value="PRTases_typeI"/>
    <property type="match status" value="1"/>
</dbReference>
<dbReference type="FunFam" id="3.40.50.2020:FF:000003">
    <property type="entry name" value="Uracil phosphoribosyltransferase"/>
    <property type="match status" value="1"/>
</dbReference>
<dbReference type="Gene3D" id="3.40.50.2020">
    <property type="match status" value="1"/>
</dbReference>
<dbReference type="HAMAP" id="MF_01218_B">
    <property type="entry name" value="Upp_B"/>
    <property type="match status" value="1"/>
</dbReference>
<dbReference type="InterPro" id="IPR000836">
    <property type="entry name" value="PRibTrfase_dom"/>
</dbReference>
<dbReference type="InterPro" id="IPR029057">
    <property type="entry name" value="PRTase-like"/>
</dbReference>
<dbReference type="InterPro" id="IPR034332">
    <property type="entry name" value="Upp_B"/>
</dbReference>
<dbReference type="InterPro" id="IPR050054">
    <property type="entry name" value="UPRTase/APRTase"/>
</dbReference>
<dbReference type="InterPro" id="IPR005765">
    <property type="entry name" value="Ura_phspho_trans"/>
</dbReference>
<dbReference type="NCBIfam" id="NF001097">
    <property type="entry name" value="PRK00129.1"/>
    <property type="match status" value="1"/>
</dbReference>
<dbReference type="NCBIfam" id="TIGR01091">
    <property type="entry name" value="upp"/>
    <property type="match status" value="1"/>
</dbReference>
<dbReference type="PANTHER" id="PTHR32315">
    <property type="entry name" value="ADENINE PHOSPHORIBOSYLTRANSFERASE"/>
    <property type="match status" value="1"/>
</dbReference>
<dbReference type="PANTHER" id="PTHR32315:SF4">
    <property type="entry name" value="URACIL PHOSPHORIBOSYLTRANSFERASE, CHLOROPLASTIC"/>
    <property type="match status" value="1"/>
</dbReference>
<dbReference type="Pfam" id="PF14681">
    <property type="entry name" value="UPRTase"/>
    <property type="match status" value="1"/>
</dbReference>
<dbReference type="SUPFAM" id="SSF53271">
    <property type="entry name" value="PRTase-like"/>
    <property type="match status" value="1"/>
</dbReference>
<feature type="chain" id="PRO_1000085639" description="Uracil phosphoribosyltransferase">
    <location>
        <begin position="1"/>
        <end position="208"/>
    </location>
</feature>
<feature type="binding site" evidence="1">
    <location>
        <position position="78"/>
    </location>
    <ligand>
        <name>5-phospho-alpha-D-ribose 1-diphosphate</name>
        <dbReference type="ChEBI" id="CHEBI:58017"/>
    </ligand>
</feature>
<feature type="binding site" evidence="1">
    <location>
        <position position="103"/>
    </location>
    <ligand>
        <name>5-phospho-alpha-D-ribose 1-diphosphate</name>
        <dbReference type="ChEBI" id="CHEBI:58017"/>
    </ligand>
</feature>
<feature type="binding site" evidence="1">
    <location>
        <begin position="130"/>
        <end position="138"/>
    </location>
    <ligand>
        <name>5-phospho-alpha-D-ribose 1-diphosphate</name>
        <dbReference type="ChEBI" id="CHEBI:58017"/>
    </ligand>
</feature>
<feature type="binding site" evidence="1">
    <location>
        <position position="193"/>
    </location>
    <ligand>
        <name>uracil</name>
        <dbReference type="ChEBI" id="CHEBI:17568"/>
    </ligand>
</feature>
<feature type="binding site" evidence="1">
    <location>
        <begin position="198"/>
        <end position="200"/>
    </location>
    <ligand>
        <name>uracil</name>
        <dbReference type="ChEBI" id="CHEBI:17568"/>
    </ligand>
</feature>
<feature type="binding site" evidence="1">
    <location>
        <position position="199"/>
    </location>
    <ligand>
        <name>5-phospho-alpha-D-ribose 1-diphosphate</name>
        <dbReference type="ChEBI" id="CHEBI:58017"/>
    </ligand>
</feature>
<gene>
    <name evidence="1" type="primary">upp</name>
    <name type="ordered locus">Shal_1681</name>
</gene>
<sequence>MKVVEVKHPLVRHKIGLMREGNISTKRFRELAAEVGSLLTYEATADFETEKVTIDGWNGPVEIEQIKGKKVTVVPILRAGLGMMDGVLEHVPSARISVVGIYRDEETLEPVPYFEKLASDMPSRIALVVDPMLATGGSMISTIDLLKERGCTAIKALVLVAAPEGVAALEKAHPDIELYTASIDDCLNEQGYILPGLGDAGDKIFGTK</sequence>
<reference key="1">
    <citation type="submission" date="2008-01" db="EMBL/GenBank/DDBJ databases">
        <title>Complete sequence of Shewanella halifaxensis HAW-EB4.</title>
        <authorList>
            <consortium name="US DOE Joint Genome Institute"/>
            <person name="Copeland A."/>
            <person name="Lucas S."/>
            <person name="Lapidus A."/>
            <person name="Glavina del Rio T."/>
            <person name="Dalin E."/>
            <person name="Tice H."/>
            <person name="Bruce D."/>
            <person name="Goodwin L."/>
            <person name="Pitluck S."/>
            <person name="Sims D."/>
            <person name="Brettin T."/>
            <person name="Detter J.C."/>
            <person name="Han C."/>
            <person name="Kuske C.R."/>
            <person name="Schmutz J."/>
            <person name="Larimer F."/>
            <person name="Land M."/>
            <person name="Hauser L."/>
            <person name="Kyrpides N."/>
            <person name="Kim E."/>
            <person name="Zhao J.-S."/>
            <person name="Richardson P."/>
        </authorList>
    </citation>
    <scope>NUCLEOTIDE SEQUENCE [LARGE SCALE GENOMIC DNA]</scope>
    <source>
        <strain>HAW-EB4</strain>
    </source>
</reference>
<comment type="function">
    <text evidence="1">Catalyzes the conversion of uracil and 5-phospho-alpha-D-ribose 1-diphosphate (PRPP) to UMP and diphosphate.</text>
</comment>
<comment type="catalytic activity">
    <reaction evidence="1">
        <text>UMP + diphosphate = 5-phospho-alpha-D-ribose 1-diphosphate + uracil</text>
        <dbReference type="Rhea" id="RHEA:13017"/>
        <dbReference type="ChEBI" id="CHEBI:17568"/>
        <dbReference type="ChEBI" id="CHEBI:33019"/>
        <dbReference type="ChEBI" id="CHEBI:57865"/>
        <dbReference type="ChEBI" id="CHEBI:58017"/>
        <dbReference type="EC" id="2.4.2.9"/>
    </reaction>
</comment>
<comment type="cofactor">
    <cofactor evidence="1">
        <name>Mg(2+)</name>
        <dbReference type="ChEBI" id="CHEBI:18420"/>
    </cofactor>
    <text evidence="1">Binds 1 Mg(2+) ion per subunit. The magnesium is bound as Mg-PRPP.</text>
</comment>
<comment type="activity regulation">
    <text evidence="1">Allosterically activated by GTP.</text>
</comment>
<comment type="pathway">
    <text evidence="1">Pyrimidine metabolism; UMP biosynthesis via salvage pathway; UMP from uracil: step 1/1.</text>
</comment>
<comment type="similarity">
    <text evidence="1">Belongs to the UPRTase family.</text>
</comment>
<protein>
    <recommendedName>
        <fullName evidence="1">Uracil phosphoribosyltransferase</fullName>
        <ecNumber evidence="1">2.4.2.9</ecNumber>
    </recommendedName>
    <alternativeName>
        <fullName evidence="1">UMP pyrophosphorylase</fullName>
    </alternativeName>
    <alternativeName>
        <fullName evidence="1">UPRTase</fullName>
    </alternativeName>
</protein>
<evidence type="ECO:0000255" key="1">
    <source>
        <dbReference type="HAMAP-Rule" id="MF_01218"/>
    </source>
</evidence>
<name>UPP_SHEHH</name>